<evidence type="ECO:0000255" key="1"/>
<evidence type="ECO:0000255" key="2">
    <source>
        <dbReference type="PROSITE-ProRule" id="PRU00283"/>
    </source>
</evidence>
<evidence type="ECO:0000256" key="3">
    <source>
        <dbReference type="SAM" id="MobiDB-lite"/>
    </source>
</evidence>
<evidence type="ECO:0000303" key="4">
    <source>
    </source>
</evidence>
<evidence type="ECO:0000305" key="5"/>
<evidence type="ECO:0000312" key="6">
    <source>
        <dbReference type="Araport" id="AT1G18550"/>
    </source>
</evidence>
<evidence type="ECO:0000312" key="7">
    <source>
        <dbReference type="EMBL" id="AAF98419.1"/>
    </source>
</evidence>
<comment type="similarity">
    <text evidence="4">Belongs to the TRAFAC class myosin-kinesin ATPase superfamily. Kinesin family. KIN-8 subfamily.</text>
</comment>
<comment type="sequence caution" evidence="5">
    <conflict type="erroneous gene model prediction">
        <sequence resource="EMBL-CDS" id="AAF98419"/>
    </conflict>
</comment>
<protein>
    <recommendedName>
        <fullName evidence="5">Kinesin-like protein KIN-8A</fullName>
    </recommendedName>
</protein>
<dbReference type="EMBL" id="AC026238">
    <property type="protein sequence ID" value="AAF98419.1"/>
    <property type="status" value="ALT_SEQ"/>
    <property type="molecule type" value="Genomic_DNA"/>
</dbReference>
<dbReference type="EMBL" id="CP002684">
    <property type="protein sequence ID" value="AEE29728.1"/>
    <property type="molecule type" value="Genomic_DNA"/>
</dbReference>
<dbReference type="PIR" id="A86319">
    <property type="entry name" value="A86319"/>
</dbReference>
<dbReference type="RefSeq" id="NP_173290.4">
    <property type="nucleotide sequence ID" value="NM_101713.5"/>
</dbReference>
<dbReference type="SMR" id="F4ICA0"/>
<dbReference type="FunCoup" id="F4ICA0">
    <property type="interactions" value="346"/>
</dbReference>
<dbReference type="STRING" id="3702.F4ICA0"/>
<dbReference type="iPTMnet" id="F4ICA0"/>
<dbReference type="PaxDb" id="3702-AT1G18550.1"/>
<dbReference type="ProteomicsDB" id="237142"/>
<dbReference type="EnsemblPlants" id="AT1G18550.1">
    <property type="protein sequence ID" value="AT1G18550.1"/>
    <property type="gene ID" value="AT1G18550"/>
</dbReference>
<dbReference type="GeneID" id="838436"/>
<dbReference type="Gramene" id="AT1G18550.1">
    <property type="protein sequence ID" value="AT1G18550.1"/>
    <property type="gene ID" value="AT1G18550"/>
</dbReference>
<dbReference type="KEGG" id="ath:AT1G18550"/>
<dbReference type="Araport" id="AT1G18550"/>
<dbReference type="TAIR" id="AT1G18550"/>
<dbReference type="eggNOG" id="KOG0242">
    <property type="taxonomic scope" value="Eukaryota"/>
</dbReference>
<dbReference type="HOGENOM" id="CLU_009927_0_0_1"/>
<dbReference type="InParanoid" id="F4ICA0"/>
<dbReference type="OMA" id="RHFCFDS"/>
<dbReference type="PRO" id="PR:F4ICA0"/>
<dbReference type="Proteomes" id="UP000006548">
    <property type="component" value="Chromosome 1"/>
</dbReference>
<dbReference type="ExpressionAtlas" id="F4ICA0">
    <property type="expression patterns" value="baseline and differential"/>
</dbReference>
<dbReference type="GO" id="GO:0005874">
    <property type="term" value="C:microtubule"/>
    <property type="evidence" value="ECO:0007669"/>
    <property type="project" value="UniProtKB-KW"/>
</dbReference>
<dbReference type="GO" id="GO:0005524">
    <property type="term" value="F:ATP binding"/>
    <property type="evidence" value="ECO:0007669"/>
    <property type="project" value="UniProtKB-KW"/>
</dbReference>
<dbReference type="GO" id="GO:0008017">
    <property type="term" value="F:microtubule binding"/>
    <property type="evidence" value="ECO:0007669"/>
    <property type="project" value="InterPro"/>
</dbReference>
<dbReference type="GO" id="GO:0003777">
    <property type="term" value="F:microtubule motor activity"/>
    <property type="evidence" value="ECO:0007669"/>
    <property type="project" value="InterPro"/>
</dbReference>
<dbReference type="GO" id="GO:0007018">
    <property type="term" value="P:microtubule-based movement"/>
    <property type="evidence" value="ECO:0007669"/>
    <property type="project" value="InterPro"/>
</dbReference>
<dbReference type="FunFam" id="3.40.850.10:FF:000054">
    <property type="entry name" value="Kinesin-like protein"/>
    <property type="match status" value="1"/>
</dbReference>
<dbReference type="Gene3D" id="3.40.850.10">
    <property type="entry name" value="Kinesin motor domain"/>
    <property type="match status" value="1"/>
</dbReference>
<dbReference type="InterPro" id="IPR027640">
    <property type="entry name" value="Kinesin-like_fam"/>
</dbReference>
<dbReference type="InterPro" id="IPR019821">
    <property type="entry name" value="Kinesin_motor_CS"/>
</dbReference>
<dbReference type="InterPro" id="IPR001752">
    <property type="entry name" value="Kinesin_motor_dom"/>
</dbReference>
<dbReference type="InterPro" id="IPR036961">
    <property type="entry name" value="Kinesin_motor_dom_sf"/>
</dbReference>
<dbReference type="InterPro" id="IPR027417">
    <property type="entry name" value="P-loop_NTPase"/>
</dbReference>
<dbReference type="PANTHER" id="PTHR47968">
    <property type="entry name" value="CENTROMERE PROTEIN E"/>
    <property type="match status" value="1"/>
</dbReference>
<dbReference type="PANTHER" id="PTHR47968:SF13">
    <property type="entry name" value="KINESIN-LIKE PROTEIN KIF19 ISOFORM X1"/>
    <property type="match status" value="1"/>
</dbReference>
<dbReference type="Pfam" id="PF00225">
    <property type="entry name" value="Kinesin"/>
    <property type="match status" value="1"/>
</dbReference>
<dbReference type="PRINTS" id="PR00380">
    <property type="entry name" value="KINESINHEAVY"/>
</dbReference>
<dbReference type="SMART" id="SM00129">
    <property type="entry name" value="KISc"/>
    <property type="match status" value="1"/>
</dbReference>
<dbReference type="SUPFAM" id="SSF52540">
    <property type="entry name" value="P-loop containing nucleoside triphosphate hydrolases"/>
    <property type="match status" value="1"/>
</dbReference>
<dbReference type="PROSITE" id="PS00411">
    <property type="entry name" value="KINESIN_MOTOR_1"/>
    <property type="match status" value="1"/>
</dbReference>
<dbReference type="PROSITE" id="PS50067">
    <property type="entry name" value="KINESIN_MOTOR_2"/>
    <property type="match status" value="1"/>
</dbReference>
<feature type="chain" id="PRO_0000437028" description="Kinesin-like protein KIN-8A">
    <location>
        <begin position="1"/>
        <end position="725"/>
    </location>
</feature>
<feature type="domain" description="Kinesin motor" evidence="2">
    <location>
        <begin position="151"/>
        <end position="481"/>
    </location>
</feature>
<feature type="region of interest" description="Disordered" evidence="3">
    <location>
        <begin position="1"/>
        <end position="32"/>
    </location>
</feature>
<feature type="region of interest" description="Disordered" evidence="3">
    <location>
        <begin position="652"/>
        <end position="672"/>
    </location>
</feature>
<feature type="region of interest" description="Disordered" evidence="3">
    <location>
        <begin position="691"/>
        <end position="725"/>
    </location>
</feature>
<feature type="coiled-coil region" evidence="1">
    <location>
        <begin position="499"/>
        <end position="541"/>
    </location>
</feature>
<feature type="coiled-coil region" evidence="1">
    <location>
        <begin position="583"/>
        <end position="617"/>
    </location>
</feature>
<feature type="compositionally biased region" description="Basic and acidic residues" evidence="3">
    <location>
        <begin position="655"/>
        <end position="665"/>
    </location>
</feature>
<feature type="binding site" evidence="2">
    <location>
        <begin position="243"/>
        <end position="250"/>
    </location>
    <ligand>
        <name>ATP</name>
        <dbReference type="ChEBI" id="CHEBI:30616"/>
    </ligand>
</feature>
<sequence length="725" mass="81769">MPVSTRSKVMKQERNEQENTNLNLPLRNPHQGLKEKMRALTLLYEQQKRASFSLRNPNHNQSPKPEDQRFKTQLLDSSKKGDRFHRLDGKDSTFVEEDTKENNVFEADRIFGVSSVPVKPSGVIRKLSMGNGARNVSEAEKLESLNASVSRILVFVRLRPMGKKERENGSRCCVKVLNKRDVYLTEFTNENDYLRLKRLRVRHFTFDSSFPETTTQQEVYSTTTGDLVEAVLEGRNGSVFCYGATGAGKTYTMLGTMENPGVMVLAIKDLFAKVRQRSLDGNHVVHLSYLEVYNETVRDLLSPGRPLILREDKQGIVAAGLTQYRAYSTDEVMALLQRGNQNRTTEPTRCNETSSRSHAILQVIVEYKTRDASMNIISRVGKLSLIDLAGSERALATDQRTLRSLEGANINRSLLALSSCINALVEGKKHIPYRNSKLTQLLKDSLGGSCNTVMIANISPSSQSFGETQNTLHWADRAKEIRVKECEVNEEVVQVGEEEGADQAKLLLELQKENSELRVQLAKQQQKLLTLQAENIAAANNNNNISLTPPSISSLMTPPSALTAQQKKKPRHSLLSGTCFTPESLKRTKAEEAVKELQLTVKALKMEMERMKREHGLQMKKQKDELMKDLCSRKSEKTPERCKETRRIVTRGSLRPKEKEKELKSPSHRFASPVAAAKKRSFWDITVANTSPALDRRKTRSHGLVHQEAPSKLLQPGFARPHMKH</sequence>
<organism>
    <name type="scientific">Arabidopsis thaliana</name>
    <name type="common">Mouse-ear cress</name>
    <dbReference type="NCBI Taxonomy" id="3702"/>
    <lineage>
        <taxon>Eukaryota</taxon>
        <taxon>Viridiplantae</taxon>
        <taxon>Streptophyta</taxon>
        <taxon>Embryophyta</taxon>
        <taxon>Tracheophyta</taxon>
        <taxon>Spermatophyta</taxon>
        <taxon>Magnoliopsida</taxon>
        <taxon>eudicotyledons</taxon>
        <taxon>Gunneridae</taxon>
        <taxon>Pentapetalae</taxon>
        <taxon>rosids</taxon>
        <taxon>malvids</taxon>
        <taxon>Brassicales</taxon>
        <taxon>Brassicaceae</taxon>
        <taxon>Camelineae</taxon>
        <taxon>Arabidopsis</taxon>
    </lineage>
</organism>
<reference key="1">
    <citation type="journal article" date="2000" name="Nature">
        <title>Sequence and analysis of chromosome 1 of the plant Arabidopsis thaliana.</title>
        <authorList>
            <person name="Theologis A."/>
            <person name="Ecker J.R."/>
            <person name="Palm C.J."/>
            <person name="Federspiel N.A."/>
            <person name="Kaul S."/>
            <person name="White O."/>
            <person name="Alonso J."/>
            <person name="Altafi H."/>
            <person name="Araujo R."/>
            <person name="Bowman C.L."/>
            <person name="Brooks S.Y."/>
            <person name="Buehler E."/>
            <person name="Chan A."/>
            <person name="Chao Q."/>
            <person name="Chen H."/>
            <person name="Cheuk R.F."/>
            <person name="Chin C.W."/>
            <person name="Chung M.K."/>
            <person name="Conn L."/>
            <person name="Conway A.B."/>
            <person name="Conway A.R."/>
            <person name="Creasy T.H."/>
            <person name="Dewar K."/>
            <person name="Dunn P."/>
            <person name="Etgu P."/>
            <person name="Feldblyum T.V."/>
            <person name="Feng J.-D."/>
            <person name="Fong B."/>
            <person name="Fujii C.Y."/>
            <person name="Gill J.E."/>
            <person name="Goldsmith A.D."/>
            <person name="Haas B."/>
            <person name="Hansen N.F."/>
            <person name="Hughes B."/>
            <person name="Huizar L."/>
            <person name="Hunter J.L."/>
            <person name="Jenkins J."/>
            <person name="Johnson-Hopson C."/>
            <person name="Khan S."/>
            <person name="Khaykin E."/>
            <person name="Kim C.J."/>
            <person name="Koo H.L."/>
            <person name="Kremenetskaia I."/>
            <person name="Kurtz D.B."/>
            <person name="Kwan A."/>
            <person name="Lam B."/>
            <person name="Langin-Hooper S."/>
            <person name="Lee A."/>
            <person name="Lee J.M."/>
            <person name="Lenz C.A."/>
            <person name="Li J.H."/>
            <person name="Li Y.-P."/>
            <person name="Lin X."/>
            <person name="Liu S.X."/>
            <person name="Liu Z.A."/>
            <person name="Luros J.S."/>
            <person name="Maiti R."/>
            <person name="Marziali A."/>
            <person name="Militscher J."/>
            <person name="Miranda M."/>
            <person name="Nguyen M."/>
            <person name="Nierman W.C."/>
            <person name="Osborne B.I."/>
            <person name="Pai G."/>
            <person name="Peterson J."/>
            <person name="Pham P.K."/>
            <person name="Rizzo M."/>
            <person name="Rooney T."/>
            <person name="Rowley D."/>
            <person name="Sakano H."/>
            <person name="Salzberg S.L."/>
            <person name="Schwartz J.R."/>
            <person name="Shinn P."/>
            <person name="Southwick A.M."/>
            <person name="Sun H."/>
            <person name="Tallon L.J."/>
            <person name="Tambunga G."/>
            <person name="Toriumi M.J."/>
            <person name="Town C.D."/>
            <person name="Utterback T."/>
            <person name="Van Aken S."/>
            <person name="Vaysberg M."/>
            <person name="Vysotskaia V.S."/>
            <person name="Walker M."/>
            <person name="Wu D."/>
            <person name="Yu G."/>
            <person name="Fraser C.M."/>
            <person name="Venter J.C."/>
            <person name="Davis R.W."/>
        </authorList>
    </citation>
    <scope>NUCLEOTIDE SEQUENCE [LARGE SCALE GENOMIC DNA]</scope>
    <source>
        <strain>cv. Columbia</strain>
    </source>
</reference>
<reference key="2">
    <citation type="journal article" date="2017" name="Plant J.">
        <title>Araport11: a complete reannotation of the Arabidopsis thaliana reference genome.</title>
        <authorList>
            <person name="Cheng C.Y."/>
            <person name="Krishnakumar V."/>
            <person name="Chan A.P."/>
            <person name="Thibaud-Nissen F."/>
            <person name="Schobel S."/>
            <person name="Town C.D."/>
        </authorList>
    </citation>
    <scope>GENOME REANNOTATION</scope>
    <source>
        <strain>cv. Columbia</strain>
    </source>
</reference>
<reference key="3">
    <citation type="journal article" date="2001" name="BMC Genomics">
        <title>Kinesins in the Arabidopsis genome: a comparative analysis among eukaryotes.</title>
        <authorList>
            <person name="Reddy A.S."/>
            <person name="Day I.S."/>
        </authorList>
    </citation>
    <scope>GENE FAMILY</scope>
</reference>
<reference key="4">
    <citation type="journal article" date="2006" name="BMC Genomics">
        <title>Comprehensive comparative analysis of kinesins in photosynthetic eukaryotes.</title>
        <authorList>
            <person name="Richardson D.N."/>
            <person name="Simmons M.P."/>
            <person name="Reddy A.S."/>
        </authorList>
    </citation>
    <scope>GENE FAMILY</scope>
    <scope>NOMENCLATURE</scope>
</reference>
<reference key="5">
    <citation type="journal article" date="2012" name="Protoplasma">
        <title>Functions of the Arabidopsis kinesin superfamily of microtubule-based motor proteins.</title>
        <authorList>
            <person name="Zhu C."/>
            <person name="Dixit R."/>
        </authorList>
    </citation>
    <scope>REVIEW</scope>
</reference>
<keyword id="KW-0067">ATP-binding</keyword>
<keyword id="KW-0175">Coiled coil</keyword>
<keyword id="KW-0493">Microtubule</keyword>
<keyword id="KW-0505">Motor protein</keyword>
<keyword id="KW-0547">Nucleotide-binding</keyword>
<keyword id="KW-1185">Reference proteome</keyword>
<proteinExistence type="inferred from homology"/>
<name>KN8A_ARATH</name>
<gene>
    <name evidence="5" type="primary">KIN8A</name>
    <name evidence="6" type="ordered locus">At1g18550</name>
    <name evidence="7" type="ORF">F25I16.11</name>
</gene>
<accession>F4ICA0</accession>
<accession>Q9FZ77</accession>